<organism>
    <name type="scientific">Escherichia coli O6:K15:H31 (strain 536 / UPEC)</name>
    <dbReference type="NCBI Taxonomy" id="362663"/>
    <lineage>
        <taxon>Bacteria</taxon>
        <taxon>Pseudomonadati</taxon>
        <taxon>Pseudomonadota</taxon>
        <taxon>Gammaproteobacteria</taxon>
        <taxon>Enterobacterales</taxon>
        <taxon>Enterobacteriaceae</taxon>
        <taxon>Escherichia</taxon>
    </lineage>
</organism>
<name>ALLS_ECOL5</name>
<evidence type="ECO:0000250" key="1"/>
<evidence type="ECO:0000255" key="2">
    <source>
        <dbReference type="PROSITE-ProRule" id="PRU00253"/>
    </source>
</evidence>
<evidence type="ECO:0000305" key="3"/>
<protein>
    <recommendedName>
        <fullName>HTH-type transcriptional activator AllS</fullName>
    </recommendedName>
</protein>
<keyword id="KW-0010">Activator</keyword>
<keyword id="KW-0238">DNA-binding</keyword>
<keyword id="KW-0804">Transcription</keyword>
<keyword id="KW-0805">Transcription regulation</keyword>
<gene>
    <name type="primary">allS</name>
    <name type="ordered locus">ECP_0565</name>
</gene>
<reference key="1">
    <citation type="journal article" date="2006" name="Mol. Microbiol.">
        <title>Role of pathogenicity island-associated integrases in the genome plasticity of uropathogenic Escherichia coli strain 536.</title>
        <authorList>
            <person name="Hochhut B."/>
            <person name="Wilde C."/>
            <person name="Balling G."/>
            <person name="Middendorf B."/>
            <person name="Dobrindt U."/>
            <person name="Brzuszkiewicz E."/>
            <person name="Gottschalk G."/>
            <person name="Carniel E."/>
            <person name="Hacker J."/>
        </authorList>
    </citation>
    <scope>NUCLEOTIDE SEQUENCE [LARGE SCALE GENOMIC DNA]</scope>
    <source>
        <strain>536 / UPEC</strain>
    </source>
</reference>
<proteinExistence type="inferred from homology"/>
<sequence length="308" mass="34556">MFDPETLRTFIAVAETGSFSKAAERLCKTTATISYRIKLLEENTGVALFFRTTRSVTLTAAGEHLLCQARDWLSWLESMPSELQQVNDGVERQVNIVINNLLYNPQAVARLLAWLNERYPFTQFHISRQIYMGVWDSLLYEGFSLAIGVTGTEALANTFSLDPLGSVQWRFVMAADHPLANVEEPLTEAQLRRFPAVNIEDSARTLTKRVAWRLPGQKEIIVPDMETKIAAHLAGVGIGFLPKSLCQSMLDNQQLVSRVIPTMRPPSPLSLAWRKFGSGKAVEDIVTLFTQRRPEISGFLEIFGNPRS</sequence>
<dbReference type="EMBL" id="CP000247">
    <property type="protein sequence ID" value="ABG68594.1"/>
    <property type="molecule type" value="Genomic_DNA"/>
</dbReference>
<dbReference type="RefSeq" id="WP_000460119.1">
    <property type="nucleotide sequence ID" value="NC_008253.1"/>
</dbReference>
<dbReference type="SMR" id="Q0TKD7"/>
<dbReference type="KEGG" id="ecp:ECP_0565"/>
<dbReference type="HOGENOM" id="CLU_039613_35_1_6"/>
<dbReference type="Proteomes" id="UP000009182">
    <property type="component" value="Chromosome"/>
</dbReference>
<dbReference type="GO" id="GO:0003677">
    <property type="term" value="F:DNA binding"/>
    <property type="evidence" value="ECO:0007669"/>
    <property type="project" value="UniProtKB-KW"/>
</dbReference>
<dbReference type="GO" id="GO:0003700">
    <property type="term" value="F:DNA-binding transcription factor activity"/>
    <property type="evidence" value="ECO:0007669"/>
    <property type="project" value="InterPro"/>
</dbReference>
<dbReference type="FunFam" id="3.40.190.290:FF:000005">
    <property type="entry name" value="HTH-type transcriptional activator AllS"/>
    <property type="match status" value="1"/>
</dbReference>
<dbReference type="FunFam" id="1.10.10.10:FF:000001">
    <property type="entry name" value="LysR family transcriptional regulator"/>
    <property type="match status" value="1"/>
</dbReference>
<dbReference type="Gene3D" id="3.40.190.290">
    <property type="match status" value="1"/>
</dbReference>
<dbReference type="Gene3D" id="1.10.10.10">
    <property type="entry name" value="Winged helix-like DNA-binding domain superfamily/Winged helix DNA-binding domain"/>
    <property type="match status" value="1"/>
</dbReference>
<dbReference type="InterPro" id="IPR050176">
    <property type="entry name" value="LTTR"/>
</dbReference>
<dbReference type="InterPro" id="IPR005119">
    <property type="entry name" value="LysR_subst-bd"/>
</dbReference>
<dbReference type="InterPro" id="IPR000847">
    <property type="entry name" value="Tscrpt_reg_HTH_LysR"/>
</dbReference>
<dbReference type="InterPro" id="IPR036388">
    <property type="entry name" value="WH-like_DNA-bd_sf"/>
</dbReference>
<dbReference type="InterPro" id="IPR036390">
    <property type="entry name" value="WH_DNA-bd_sf"/>
</dbReference>
<dbReference type="NCBIfam" id="NF007501">
    <property type="entry name" value="PRK10094.1"/>
    <property type="match status" value="1"/>
</dbReference>
<dbReference type="PANTHER" id="PTHR30579:SF0">
    <property type="entry name" value="HTH-TYPE TRANSCRIPTIONAL ACTIVATOR ALLS"/>
    <property type="match status" value="1"/>
</dbReference>
<dbReference type="PANTHER" id="PTHR30579">
    <property type="entry name" value="TRANSCRIPTIONAL REGULATOR"/>
    <property type="match status" value="1"/>
</dbReference>
<dbReference type="Pfam" id="PF00126">
    <property type="entry name" value="HTH_1"/>
    <property type="match status" value="1"/>
</dbReference>
<dbReference type="Pfam" id="PF03466">
    <property type="entry name" value="LysR_substrate"/>
    <property type="match status" value="1"/>
</dbReference>
<dbReference type="SUPFAM" id="SSF53850">
    <property type="entry name" value="Periplasmic binding protein-like II"/>
    <property type="match status" value="1"/>
</dbReference>
<dbReference type="SUPFAM" id="SSF46785">
    <property type="entry name" value="Winged helix' DNA-binding domain"/>
    <property type="match status" value="1"/>
</dbReference>
<dbReference type="PROSITE" id="PS50931">
    <property type="entry name" value="HTH_LYSR"/>
    <property type="match status" value="1"/>
</dbReference>
<feature type="chain" id="PRO_0000312809" description="HTH-type transcriptional activator AllS">
    <location>
        <begin position="1"/>
        <end position="308"/>
    </location>
</feature>
<feature type="domain" description="HTH lysR-type" evidence="2">
    <location>
        <begin position="2"/>
        <end position="59"/>
    </location>
</feature>
<feature type="DNA-binding region" description="H-T-H motif" evidence="2">
    <location>
        <begin position="19"/>
        <end position="38"/>
    </location>
</feature>
<accession>Q0TKD7</accession>
<comment type="function">
    <text evidence="1">Positive regulator essential for the expression of allD operon. Binds to the allD promoter (By similarity).</text>
</comment>
<comment type="similarity">
    <text evidence="3">Belongs to the LysR transcriptional regulatory family.</text>
</comment>